<dbReference type="EMBL" id="ACFL01000260">
    <property type="protein sequence ID" value="EEU05905.1"/>
    <property type="molecule type" value="Genomic_DNA"/>
</dbReference>
<dbReference type="SMR" id="C7GTE8"/>
<dbReference type="OrthoDB" id="40992at4893"/>
<dbReference type="Proteomes" id="UP000008073">
    <property type="component" value="Unassembled WGS sequence"/>
</dbReference>
<dbReference type="GO" id="GO:0005737">
    <property type="term" value="C:cytoplasm"/>
    <property type="evidence" value="ECO:0007669"/>
    <property type="project" value="TreeGrafter"/>
</dbReference>
<dbReference type="GO" id="GO:0031588">
    <property type="term" value="C:nucleotide-activated protein kinase complex"/>
    <property type="evidence" value="ECO:0007669"/>
    <property type="project" value="TreeGrafter"/>
</dbReference>
<dbReference type="GO" id="GO:0005634">
    <property type="term" value="C:nucleus"/>
    <property type="evidence" value="ECO:0007669"/>
    <property type="project" value="TreeGrafter"/>
</dbReference>
<dbReference type="GO" id="GO:0005886">
    <property type="term" value="C:plasma membrane"/>
    <property type="evidence" value="ECO:0007669"/>
    <property type="project" value="UniProtKB-SubCell"/>
</dbReference>
<dbReference type="GO" id="GO:0019901">
    <property type="term" value="F:protein kinase binding"/>
    <property type="evidence" value="ECO:0007669"/>
    <property type="project" value="TreeGrafter"/>
</dbReference>
<dbReference type="GO" id="GO:0007165">
    <property type="term" value="P:signal transduction"/>
    <property type="evidence" value="ECO:0007669"/>
    <property type="project" value="TreeGrafter"/>
</dbReference>
<dbReference type="CDD" id="cd02859">
    <property type="entry name" value="E_set_AMPKbeta_like_N"/>
    <property type="match status" value="1"/>
</dbReference>
<dbReference type="Gene3D" id="2.60.40.10">
    <property type="entry name" value="Immunoglobulins"/>
    <property type="match status" value="1"/>
</dbReference>
<dbReference type="InterPro" id="IPR032640">
    <property type="entry name" value="AMPK1_CBM"/>
</dbReference>
<dbReference type="InterPro" id="IPR050827">
    <property type="entry name" value="CRP1_MDG1_kinase"/>
</dbReference>
<dbReference type="InterPro" id="IPR013783">
    <property type="entry name" value="Ig-like_fold"/>
</dbReference>
<dbReference type="InterPro" id="IPR014756">
    <property type="entry name" value="Ig_E-set"/>
</dbReference>
<dbReference type="PANTHER" id="PTHR10343">
    <property type="entry name" value="5'-AMP-ACTIVATED PROTEIN KINASE , BETA SUBUNIT"/>
    <property type="match status" value="1"/>
</dbReference>
<dbReference type="PANTHER" id="PTHR10343:SF81">
    <property type="entry name" value="CRUCIFORM DNA-RECOGNIZING PROTEIN 1-RELATED"/>
    <property type="match status" value="1"/>
</dbReference>
<dbReference type="Pfam" id="PF16561">
    <property type="entry name" value="AMPK1_CBM"/>
    <property type="match status" value="1"/>
</dbReference>
<dbReference type="SUPFAM" id="SSF81296">
    <property type="entry name" value="E set domains"/>
    <property type="match status" value="1"/>
</dbReference>
<reference key="1">
    <citation type="journal article" date="2009" name="Genome Res.">
        <title>Genome structure of a Saccharomyces cerevisiae strain widely used in bioethanol production.</title>
        <authorList>
            <person name="Argueso J.L."/>
            <person name="Carazzolle M.F."/>
            <person name="Mieczkowski P.A."/>
            <person name="Duarte F.M."/>
            <person name="Netto O.V.C."/>
            <person name="Missawa S.K."/>
            <person name="Galzerani F."/>
            <person name="Costa G.G.L."/>
            <person name="Vidal R.O."/>
            <person name="Noronha M.F."/>
            <person name="Dominska M."/>
            <person name="Andrietta M.G.S."/>
            <person name="Andrietta S.R."/>
            <person name="Cunha A.F."/>
            <person name="Gomes L.H."/>
            <person name="Tavares F.C.A."/>
            <person name="Alcarde A.R."/>
            <person name="Dietrich F.S."/>
            <person name="McCusker J.H."/>
            <person name="Petes T.D."/>
            <person name="Pereira G.A.G."/>
        </authorList>
    </citation>
    <scope>NUCLEOTIDE SEQUENCE [LARGE SCALE GENOMIC DNA]</scope>
    <source>
        <strain>JAY291</strain>
    </source>
</reference>
<evidence type="ECO:0000250" key="1"/>
<evidence type="ECO:0000250" key="2">
    <source>
        <dbReference type="UniProtKB" id="P53885"/>
    </source>
</evidence>
<evidence type="ECO:0000256" key="3">
    <source>
        <dbReference type="SAM" id="MobiDB-lite"/>
    </source>
</evidence>
<evidence type="ECO:0000305" key="4"/>
<protein>
    <recommendedName>
        <fullName>Signal transduction protein MDG1</fullName>
    </recommendedName>
    <alternativeName>
        <fullName>Multicopy suppressor of defective G-protein 1</fullName>
    </alternativeName>
</protein>
<proteinExistence type="inferred from homology"/>
<keyword id="KW-1003">Cell membrane</keyword>
<keyword id="KW-1017">Isopeptide bond</keyword>
<keyword id="KW-0472">Membrane</keyword>
<keyword id="KW-0597">Phosphoprotein</keyword>
<keyword id="KW-0832">Ubl conjugation</keyword>
<accession>C7GTE8</accession>
<sequence>MQSSLPQFTFKWPKGPEAIILTGTFDDWKGTLPMVKDPSGAFEITLPVTFDSPSSKFYFKFIVDGQWLPSKDYKVNIDEGVENNFITEEDVIKQRENGSSTLVPESAGLAVSKNAPLIEPEAEKRAKKLRKFKIKRVIKTNKQTGERSIFSQEVVELPDSEDETQQVNKTGKNADGLSGTTTIIENNVGVNEEKAIKPYEENHPKVNLVKSEGYVTDGLGKTQSSESRLYELSAEDLEKEEEEEDEDKGGGKDTSTSADAEASEDQNKEPLSKSAKFEKPEEKVPVSSITSHAKETSVKPTGKVATETQTYETKQGAPTAAAKKIEAKKATRPSKPKGTKETPYKGVQKNPAKNGGFFKKLAQLLK</sequence>
<feature type="chain" id="PRO_0000409624" description="Signal transduction protein MDG1">
    <location>
        <begin position="1"/>
        <end position="366"/>
    </location>
</feature>
<feature type="region of interest" description="Disordered" evidence="3">
    <location>
        <begin position="159"/>
        <end position="180"/>
    </location>
</feature>
<feature type="region of interest" description="Disordered" evidence="3">
    <location>
        <begin position="217"/>
        <end position="366"/>
    </location>
</feature>
<feature type="compositionally biased region" description="Acidic residues" evidence="3">
    <location>
        <begin position="233"/>
        <end position="247"/>
    </location>
</feature>
<feature type="compositionally biased region" description="Basic and acidic residues" evidence="3">
    <location>
        <begin position="265"/>
        <end position="284"/>
    </location>
</feature>
<feature type="modified residue" description="Phosphoserine" evidence="2">
    <location>
        <position position="160"/>
    </location>
</feature>
<feature type="modified residue" description="Phosphothreonine" evidence="2">
    <location>
        <position position="216"/>
    </location>
</feature>
<feature type="modified residue" description="Phosphoserine" evidence="2">
    <location>
        <position position="288"/>
    </location>
</feature>
<feature type="cross-link" description="Glycyl lysine isopeptide (Lys-Gly) (interchain with G-Cter in ubiquitin)" evidence="2">
    <location>
        <position position="314"/>
    </location>
</feature>
<organism>
    <name type="scientific">Saccharomyces cerevisiae (strain JAY291)</name>
    <name type="common">Baker's yeast</name>
    <dbReference type="NCBI Taxonomy" id="574961"/>
    <lineage>
        <taxon>Eukaryota</taxon>
        <taxon>Fungi</taxon>
        <taxon>Dikarya</taxon>
        <taxon>Ascomycota</taxon>
        <taxon>Saccharomycotina</taxon>
        <taxon>Saccharomycetes</taxon>
        <taxon>Saccharomycetales</taxon>
        <taxon>Saccharomycetaceae</taxon>
        <taxon>Saccharomyces</taxon>
    </lineage>
</organism>
<gene>
    <name type="primary">MDG1</name>
    <name type="ORF">C1Q_03692</name>
</gene>
<comment type="function">
    <text evidence="1">Involved in G-protein mediated signal transduction and in the regulation of polarized cell growth in pheromone-induced cells.</text>
</comment>
<comment type="subcellular location">
    <subcellularLocation>
        <location evidence="1">Cell membrane</location>
        <topology evidence="1">Peripheral membrane protein</topology>
    </subcellularLocation>
</comment>
<comment type="similarity">
    <text evidence="4">Belongs to the CRP1/MDG1 family.</text>
</comment>
<name>MDG1_YEAS2</name>